<sequence length="95" mass="10689">MSTHNNSPKEKPVDMNNISEKLDVVNNAPEKPAGANHIPEKLAEMTSSEWIAEYWKGINRGNDVPCCCPRKMTSADKKFSVFGKGYLMRSMQKDD</sequence>
<protein>
    <recommendedName>
        <fullName evidence="2">TBK1 inhibitor DP96R</fullName>
    </recommendedName>
</protein>
<feature type="chain" id="PRO_0000379090" description="TBK1 inhibitor DP96R">
    <location>
        <begin position="1"/>
        <end position="95"/>
    </location>
</feature>
<gene>
    <name type="ordered locus">Pret-176</name>
</gene>
<proteinExistence type="inferred from homology"/>
<comment type="function">
    <text evidence="1">Inhibits cGAS-STING-mediated type I IFN expression and NF-kB activation by inhibiting TBK1 and IKBKB/IKKB (By similarity). Inhibits host TBK1 phosphorylation (By similarity).</text>
</comment>
<comment type="similarity">
    <text evidence="2">Belongs to the asfivirus DP96R family.</text>
</comment>
<evidence type="ECO:0000250" key="1">
    <source>
        <dbReference type="UniProtKB" id="Q65213"/>
    </source>
</evidence>
<evidence type="ECO:0000305" key="2"/>
<accession>P0C759</accession>
<keyword id="KW-0945">Host-virus interaction</keyword>
<keyword id="KW-1090">Inhibition of host innate immune response by virus</keyword>
<keyword id="KW-1100">Inhibition of host NF-kappa-B by virus</keyword>
<keyword id="KW-1223">Inhibition of host TBK1 by virus</keyword>
<keyword id="KW-1225">Inhibition of host TLR pathway by virus</keyword>
<keyword id="KW-0899">Viral immunoevasion</keyword>
<dbReference type="EMBL" id="AY261363">
    <property type="status" value="NOT_ANNOTATED_CDS"/>
    <property type="molecule type" value="Genomic_DNA"/>
</dbReference>
<dbReference type="Proteomes" id="UP000000859">
    <property type="component" value="Segment"/>
</dbReference>
<dbReference type="GO" id="GO:0039723">
    <property type="term" value="P:symbiont-mediated suppression of host cytoplasmic pattern recognition receptor signaling pathway via inhibition of TBK1 activity"/>
    <property type="evidence" value="ECO:0007669"/>
    <property type="project" value="UniProtKB-KW"/>
</dbReference>
<dbReference type="GO" id="GO:0085034">
    <property type="term" value="P:symbiont-mediated suppression of host NF-kappaB cascade"/>
    <property type="evidence" value="ECO:0007669"/>
    <property type="project" value="UniProtKB-KW"/>
</dbReference>
<dbReference type="GO" id="GO:0039722">
    <property type="term" value="P:symbiont-mediated suppression of host toll-like receptor signaling pathway"/>
    <property type="evidence" value="ECO:0007669"/>
    <property type="project" value="UniProtKB-KW"/>
</dbReference>
<dbReference type="InterPro" id="IPR003670">
    <property type="entry name" value="ASFV_DP96R"/>
</dbReference>
<dbReference type="Pfam" id="PF02512">
    <property type="entry name" value="UK"/>
    <property type="match status" value="1"/>
</dbReference>
<organismHost>
    <name type="scientific">Ornithodoros</name>
    <name type="common">relapsing fever ticks</name>
    <dbReference type="NCBI Taxonomy" id="6937"/>
</organismHost>
<organismHost>
    <name type="scientific">Phacochoerus aethiopicus</name>
    <name type="common">Warthog</name>
    <dbReference type="NCBI Taxonomy" id="85517"/>
</organismHost>
<organismHost>
    <name type="scientific">Phacochoerus africanus</name>
    <name type="common">Warthog</name>
    <dbReference type="NCBI Taxonomy" id="41426"/>
</organismHost>
<organismHost>
    <name type="scientific">Potamochoerus larvatus</name>
    <name type="common">Bushpig</name>
    <dbReference type="NCBI Taxonomy" id="273792"/>
</organismHost>
<organismHost>
    <name type="scientific">Sus scrofa</name>
    <name type="common">Pig</name>
    <dbReference type="NCBI Taxonomy" id="9823"/>
</organismHost>
<reference key="1">
    <citation type="submission" date="2003-03" db="EMBL/GenBank/DDBJ databases">
        <title>African swine fever virus genomes.</title>
        <authorList>
            <person name="Kutish G.F."/>
            <person name="Rock D.L."/>
        </authorList>
    </citation>
    <scope>NUCLEOTIDE SEQUENCE [LARGE SCALE GENOMIC DNA]</scope>
</reference>
<name>DP96R_ASFP4</name>
<organism>
    <name type="scientific">African swine fever virus (isolate Tick/South Africa/Pretoriuskop Pr4/1996)</name>
    <name type="common">ASFV</name>
    <dbReference type="NCBI Taxonomy" id="561443"/>
    <lineage>
        <taxon>Viruses</taxon>
        <taxon>Varidnaviria</taxon>
        <taxon>Bamfordvirae</taxon>
        <taxon>Nucleocytoviricota</taxon>
        <taxon>Pokkesviricetes</taxon>
        <taxon>Asfuvirales</taxon>
        <taxon>Asfarviridae</taxon>
        <taxon>Asfivirus</taxon>
        <taxon>African swine fever virus</taxon>
    </lineage>
</organism>